<protein>
    <recommendedName>
        <fullName evidence="1">Shikimate dehydrogenase (NADP(+))</fullName>
        <shortName evidence="1">SDH</shortName>
        <ecNumber evidence="1">1.1.1.25</ecNumber>
    </recommendedName>
</protein>
<feature type="chain" id="PRO_1000021305" description="Shikimate dehydrogenase (NADP(+))">
    <location>
        <begin position="1"/>
        <end position="278"/>
    </location>
</feature>
<feature type="active site" description="Proton acceptor" evidence="1">
    <location>
        <position position="70"/>
    </location>
</feature>
<feature type="binding site" evidence="1">
    <location>
        <begin position="19"/>
        <end position="21"/>
    </location>
    <ligand>
        <name>shikimate</name>
        <dbReference type="ChEBI" id="CHEBI:36208"/>
    </ligand>
</feature>
<feature type="binding site" evidence="1">
    <location>
        <position position="66"/>
    </location>
    <ligand>
        <name>shikimate</name>
        <dbReference type="ChEBI" id="CHEBI:36208"/>
    </ligand>
</feature>
<feature type="binding site" evidence="1">
    <location>
        <position position="91"/>
    </location>
    <ligand>
        <name>shikimate</name>
        <dbReference type="ChEBI" id="CHEBI:36208"/>
    </ligand>
</feature>
<feature type="binding site" evidence="1">
    <location>
        <position position="106"/>
    </location>
    <ligand>
        <name>shikimate</name>
        <dbReference type="ChEBI" id="CHEBI:36208"/>
    </ligand>
</feature>
<feature type="binding site" evidence="1">
    <location>
        <begin position="130"/>
        <end position="134"/>
    </location>
    <ligand>
        <name>NADP(+)</name>
        <dbReference type="ChEBI" id="CHEBI:58349"/>
    </ligand>
</feature>
<feature type="binding site" evidence="1">
    <location>
        <position position="222"/>
    </location>
    <ligand>
        <name>NADP(+)</name>
        <dbReference type="ChEBI" id="CHEBI:58349"/>
    </ligand>
</feature>
<feature type="binding site" evidence="1">
    <location>
        <position position="224"/>
    </location>
    <ligand>
        <name>shikimate</name>
        <dbReference type="ChEBI" id="CHEBI:36208"/>
    </ligand>
</feature>
<feature type="binding site" evidence="1">
    <location>
        <position position="245"/>
    </location>
    <ligand>
        <name>NADP(+)</name>
        <dbReference type="ChEBI" id="CHEBI:58349"/>
    </ligand>
</feature>
<name>AROE_METMP</name>
<evidence type="ECO:0000255" key="1">
    <source>
        <dbReference type="HAMAP-Rule" id="MF_00222"/>
    </source>
</evidence>
<organism>
    <name type="scientific">Methanococcus maripaludis (strain DSM 14266 / JCM 13030 / NBRC 101832 / S2 / LL)</name>
    <dbReference type="NCBI Taxonomy" id="267377"/>
    <lineage>
        <taxon>Archaea</taxon>
        <taxon>Methanobacteriati</taxon>
        <taxon>Methanobacteriota</taxon>
        <taxon>Methanomada group</taxon>
        <taxon>Methanococci</taxon>
        <taxon>Methanococcales</taxon>
        <taxon>Methanococcaceae</taxon>
        <taxon>Methanococcus</taxon>
    </lineage>
</organism>
<keyword id="KW-0028">Amino-acid biosynthesis</keyword>
<keyword id="KW-0057">Aromatic amino acid biosynthesis</keyword>
<keyword id="KW-0521">NADP</keyword>
<keyword id="KW-0560">Oxidoreductase</keyword>
<keyword id="KW-1185">Reference proteome</keyword>
<sequence length="278" mass="30781">MINSKTKLVGLIGHPVDHSFSPIMHNAAIKDLKINYRYFAFDVSEENLKDVVAGAKAFNFRGFNITIPHKMNIMKYLDEIDCDAEAIGAVNTVKIENGKAIGYNTDGIGVKKALEEKTGILINKNILIIGSGGASRAVSFELAKDNNLTIVNRNIEKAENLSKEISRKLKKENPLNYGGLDINIENFDIIINTTPVGMYPHTEVEPVIPLNNIKKDAVVMDLIYNPLEPVFLKEAKKYGAKTINGIGMLVYQGAVSFEIWTGIKPDIFVMKKSIISKI</sequence>
<proteinExistence type="inferred from homology"/>
<dbReference type="EC" id="1.1.1.25" evidence="1"/>
<dbReference type="EMBL" id="BX950229">
    <property type="protein sequence ID" value="CAF30492.1"/>
    <property type="molecule type" value="Genomic_DNA"/>
</dbReference>
<dbReference type="RefSeq" id="WP_011170880.1">
    <property type="nucleotide sequence ID" value="NC_005791.1"/>
</dbReference>
<dbReference type="SMR" id="Q6LYQ2"/>
<dbReference type="STRING" id="267377.MMP0936"/>
<dbReference type="EnsemblBacteria" id="CAF30492">
    <property type="protein sequence ID" value="CAF30492"/>
    <property type="gene ID" value="MMP0936"/>
</dbReference>
<dbReference type="GeneID" id="2762259"/>
<dbReference type="KEGG" id="mmp:MMP0936"/>
<dbReference type="PATRIC" id="fig|267377.15.peg.964"/>
<dbReference type="eggNOG" id="arCOG01033">
    <property type="taxonomic scope" value="Archaea"/>
</dbReference>
<dbReference type="HOGENOM" id="CLU_044063_4_1_2"/>
<dbReference type="OrthoDB" id="8744at2157"/>
<dbReference type="UniPathway" id="UPA00053">
    <property type="reaction ID" value="UER00087"/>
</dbReference>
<dbReference type="Proteomes" id="UP000000590">
    <property type="component" value="Chromosome"/>
</dbReference>
<dbReference type="GO" id="GO:0050661">
    <property type="term" value="F:NADP binding"/>
    <property type="evidence" value="ECO:0007669"/>
    <property type="project" value="InterPro"/>
</dbReference>
<dbReference type="GO" id="GO:0004764">
    <property type="term" value="F:shikimate 3-dehydrogenase (NADP+) activity"/>
    <property type="evidence" value="ECO:0007669"/>
    <property type="project" value="UniProtKB-UniRule"/>
</dbReference>
<dbReference type="GO" id="GO:0008652">
    <property type="term" value="P:amino acid biosynthetic process"/>
    <property type="evidence" value="ECO:0007669"/>
    <property type="project" value="UniProtKB-KW"/>
</dbReference>
<dbReference type="GO" id="GO:0009073">
    <property type="term" value="P:aromatic amino acid family biosynthetic process"/>
    <property type="evidence" value="ECO:0007669"/>
    <property type="project" value="UniProtKB-KW"/>
</dbReference>
<dbReference type="GO" id="GO:0009423">
    <property type="term" value="P:chorismate biosynthetic process"/>
    <property type="evidence" value="ECO:0007669"/>
    <property type="project" value="UniProtKB-UniRule"/>
</dbReference>
<dbReference type="GO" id="GO:0019632">
    <property type="term" value="P:shikimate metabolic process"/>
    <property type="evidence" value="ECO:0007669"/>
    <property type="project" value="InterPro"/>
</dbReference>
<dbReference type="CDD" id="cd01065">
    <property type="entry name" value="NAD_bind_Shikimate_DH"/>
    <property type="match status" value="1"/>
</dbReference>
<dbReference type="Gene3D" id="3.40.50.10860">
    <property type="entry name" value="Leucine Dehydrogenase, chain A, domain 1"/>
    <property type="match status" value="1"/>
</dbReference>
<dbReference type="Gene3D" id="3.40.50.720">
    <property type="entry name" value="NAD(P)-binding Rossmann-like Domain"/>
    <property type="match status" value="1"/>
</dbReference>
<dbReference type="HAMAP" id="MF_00222">
    <property type="entry name" value="Shikimate_DH_AroE"/>
    <property type="match status" value="1"/>
</dbReference>
<dbReference type="InterPro" id="IPR046346">
    <property type="entry name" value="Aminoacid_DH-like_N_sf"/>
</dbReference>
<dbReference type="InterPro" id="IPR036291">
    <property type="entry name" value="NAD(P)-bd_dom_sf"/>
</dbReference>
<dbReference type="InterPro" id="IPR041121">
    <property type="entry name" value="SDH_C"/>
</dbReference>
<dbReference type="InterPro" id="IPR011342">
    <property type="entry name" value="Shikimate_DH"/>
</dbReference>
<dbReference type="InterPro" id="IPR013708">
    <property type="entry name" value="Shikimate_DH-bd_N"/>
</dbReference>
<dbReference type="InterPro" id="IPR022893">
    <property type="entry name" value="Shikimate_DH_fam"/>
</dbReference>
<dbReference type="InterPro" id="IPR006151">
    <property type="entry name" value="Shikm_DH/Glu-tRNA_Rdtase"/>
</dbReference>
<dbReference type="NCBIfam" id="TIGR00507">
    <property type="entry name" value="aroE"/>
    <property type="match status" value="1"/>
</dbReference>
<dbReference type="NCBIfam" id="NF001314">
    <property type="entry name" value="PRK00258.2-2"/>
    <property type="match status" value="1"/>
</dbReference>
<dbReference type="NCBIfam" id="NF001319">
    <property type="entry name" value="PRK00258.3-3"/>
    <property type="match status" value="1"/>
</dbReference>
<dbReference type="PANTHER" id="PTHR21089:SF1">
    <property type="entry name" value="BIFUNCTIONAL 3-DEHYDROQUINATE DEHYDRATASE_SHIKIMATE DEHYDROGENASE, CHLOROPLASTIC"/>
    <property type="match status" value="1"/>
</dbReference>
<dbReference type="PANTHER" id="PTHR21089">
    <property type="entry name" value="SHIKIMATE DEHYDROGENASE"/>
    <property type="match status" value="1"/>
</dbReference>
<dbReference type="Pfam" id="PF18317">
    <property type="entry name" value="SDH_C"/>
    <property type="match status" value="1"/>
</dbReference>
<dbReference type="Pfam" id="PF01488">
    <property type="entry name" value="Shikimate_DH"/>
    <property type="match status" value="1"/>
</dbReference>
<dbReference type="Pfam" id="PF08501">
    <property type="entry name" value="Shikimate_dh_N"/>
    <property type="match status" value="1"/>
</dbReference>
<dbReference type="SUPFAM" id="SSF53223">
    <property type="entry name" value="Aminoacid dehydrogenase-like, N-terminal domain"/>
    <property type="match status" value="1"/>
</dbReference>
<dbReference type="SUPFAM" id="SSF51735">
    <property type="entry name" value="NAD(P)-binding Rossmann-fold domains"/>
    <property type="match status" value="1"/>
</dbReference>
<reference key="1">
    <citation type="journal article" date="2004" name="J. Bacteriol.">
        <title>Complete genome sequence of the genetically tractable hydrogenotrophic methanogen Methanococcus maripaludis.</title>
        <authorList>
            <person name="Hendrickson E.L."/>
            <person name="Kaul R."/>
            <person name="Zhou Y."/>
            <person name="Bovee D."/>
            <person name="Chapman P."/>
            <person name="Chung J."/>
            <person name="Conway de Macario E."/>
            <person name="Dodsworth J.A."/>
            <person name="Gillett W."/>
            <person name="Graham D.E."/>
            <person name="Hackett M."/>
            <person name="Haydock A.K."/>
            <person name="Kang A."/>
            <person name="Land M.L."/>
            <person name="Levy R."/>
            <person name="Lie T.J."/>
            <person name="Major T.A."/>
            <person name="Moore B.C."/>
            <person name="Porat I."/>
            <person name="Palmeiri A."/>
            <person name="Rouse G."/>
            <person name="Saenphimmachak C."/>
            <person name="Soell D."/>
            <person name="Van Dien S."/>
            <person name="Wang T."/>
            <person name="Whitman W.B."/>
            <person name="Xia Q."/>
            <person name="Zhang Y."/>
            <person name="Larimer F.W."/>
            <person name="Olson M.V."/>
            <person name="Leigh J.A."/>
        </authorList>
    </citation>
    <scope>NUCLEOTIDE SEQUENCE [LARGE SCALE GENOMIC DNA]</scope>
    <source>
        <strain>DSM 14266 / JCM 13030 / NBRC 101832 / S2 / LL</strain>
    </source>
</reference>
<accession>Q6LYQ2</accession>
<gene>
    <name evidence="1" type="primary">aroE</name>
    <name type="ordered locus">MMP0936</name>
</gene>
<comment type="function">
    <text evidence="1">Involved in the biosynthesis of the chorismate, which leads to the biosynthesis of aromatic amino acids. Catalyzes the reversible NADPH linked reduction of 3-dehydroshikimate (DHSA) to yield shikimate (SA).</text>
</comment>
<comment type="catalytic activity">
    <reaction evidence="1">
        <text>shikimate + NADP(+) = 3-dehydroshikimate + NADPH + H(+)</text>
        <dbReference type="Rhea" id="RHEA:17737"/>
        <dbReference type="ChEBI" id="CHEBI:15378"/>
        <dbReference type="ChEBI" id="CHEBI:16630"/>
        <dbReference type="ChEBI" id="CHEBI:36208"/>
        <dbReference type="ChEBI" id="CHEBI:57783"/>
        <dbReference type="ChEBI" id="CHEBI:58349"/>
        <dbReference type="EC" id="1.1.1.25"/>
    </reaction>
</comment>
<comment type="pathway">
    <text evidence="1">Metabolic intermediate biosynthesis; chorismate biosynthesis; chorismate from D-erythrose 4-phosphate and phosphoenolpyruvate: step 4/7.</text>
</comment>
<comment type="subunit">
    <text evidence="1">Homodimer.</text>
</comment>
<comment type="similarity">
    <text evidence="1">Belongs to the shikimate dehydrogenase family.</text>
</comment>